<feature type="chain" id="PRO_0000400009" description="Metal tolerance protein 1">
    <location>
        <begin position="1"/>
        <end position="418"/>
    </location>
</feature>
<feature type="topological domain" description="Cytoplasmic" evidence="2">
    <location>
        <begin position="1"/>
        <end position="56"/>
    </location>
</feature>
<feature type="transmembrane region" description="Helical" evidence="2">
    <location>
        <begin position="57"/>
        <end position="77"/>
    </location>
</feature>
<feature type="topological domain" description="Vacuolar" evidence="2">
    <location>
        <begin position="78"/>
        <end position="89"/>
    </location>
</feature>
<feature type="transmembrane region" description="Helical" evidence="2">
    <location>
        <begin position="90"/>
        <end position="110"/>
    </location>
</feature>
<feature type="topological domain" description="Cytoplasmic" evidence="2">
    <location>
        <begin position="111"/>
        <end position="122"/>
    </location>
</feature>
<feature type="transmembrane region" description="Helical" evidence="2">
    <location>
        <begin position="123"/>
        <end position="143"/>
    </location>
</feature>
<feature type="topological domain" description="Vacuolar" evidence="2">
    <location>
        <begin position="144"/>
        <end position="160"/>
    </location>
</feature>
<feature type="transmembrane region" description="Helical" evidence="2">
    <location>
        <begin position="161"/>
        <end position="181"/>
    </location>
</feature>
<feature type="topological domain" description="Cytoplasmic" evidence="2">
    <location>
        <begin position="182"/>
        <end position="282"/>
    </location>
</feature>
<feature type="transmembrane region" description="Helical" evidence="2">
    <location>
        <begin position="283"/>
        <end position="303"/>
    </location>
</feature>
<feature type="topological domain" description="Vacuolar" evidence="2">
    <location>
        <begin position="304"/>
        <end position="307"/>
    </location>
</feature>
<feature type="transmembrane region" description="Helical" evidence="2">
    <location>
        <begin position="308"/>
        <end position="328"/>
    </location>
</feature>
<feature type="topological domain" description="Cytoplasmic" evidence="2">
    <location>
        <begin position="329"/>
        <end position="418"/>
    </location>
</feature>
<feature type="region of interest" description="Required for zinc-binding" evidence="1">
    <location>
        <begin position="182"/>
        <end position="246"/>
    </location>
</feature>
<feature type="region of interest" description="Disordered" evidence="3">
    <location>
        <begin position="186"/>
        <end position="248"/>
    </location>
</feature>
<feature type="compositionally biased region" description="Basic and acidic residues" evidence="3">
    <location>
        <begin position="196"/>
        <end position="227"/>
    </location>
</feature>
<feature type="compositionally biased region" description="Basic residues" evidence="3">
    <location>
        <begin position="235"/>
        <end position="245"/>
    </location>
</feature>
<feature type="sequence conflict" description="In Ref. 1; AAP31024." evidence="4" ref="1">
    <original>M</original>
    <variation>L</variation>
    <location>
        <position position="55"/>
    </location>
</feature>
<feature type="sequence conflict" description="In Ref. 1; AAP31024." evidence="4" ref="1">
    <original>NV</original>
    <variation>SI</variation>
    <location>
        <begin position="277"/>
        <end position="278"/>
    </location>
</feature>
<evidence type="ECO:0000250" key="1"/>
<evidence type="ECO:0000255" key="2"/>
<evidence type="ECO:0000256" key="3">
    <source>
        <dbReference type="SAM" id="MobiDB-lite"/>
    </source>
</evidence>
<evidence type="ECO:0000305" key="4"/>
<organism>
    <name type="scientific">Oryza sativa subsp. japonica</name>
    <name type="common">Rice</name>
    <dbReference type="NCBI Taxonomy" id="39947"/>
    <lineage>
        <taxon>Eukaryota</taxon>
        <taxon>Viridiplantae</taxon>
        <taxon>Streptophyta</taxon>
        <taxon>Embryophyta</taxon>
        <taxon>Tracheophyta</taxon>
        <taxon>Spermatophyta</taxon>
        <taxon>Magnoliopsida</taxon>
        <taxon>Liliopsida</taxon>
        <taxon>Poales</taxon>
        <taxon>Poaceae</taxon>
        <taxon>BOP clade</taxon>
        <taxon>Oryzoideae</taxon>
        <taxon>Oryzeae</taxon>
        <taxon>Oryzinae</taxon>
        <taxon>Oryza</taxon>
        <taxon>Oryza sativa</taxon>
    </lineage>
</organism>
<name>MTP1_ORYSJ</name>
<reference key="1">
    <citation type="submission" date="2003-04" db="EMBL/GenBank/DDBJ databases">
        <title>Cloning and characterization of a ZAT-like zinc transporter cDNA from rice.</title>
        <authorList>
            <person name="Huang J."/>
            <person name="Zhang H."/>
            <person name="Hou F."/>
        </authorList>
    </citation>
    <scope>NUCLEOTIDE SEQUENCE [MRNA]</scope>
    <source>
        <strain>cv. Jiu Caiqing</strain>
        <tissue>Root</tissue>
    </source>
</reference>
<reference key="2">
    <citation type="journal article" date="2005" name="Mol. Genet. Genomics">
        <title>A fine physical map of the rice chromosome 5.</title>
        <authorList>
            <person name="Cheng C.-H."/>
            <person name="Chung M.C."/>
            <person name="Liu S.-M."/>
            <person name="Chen S.-K."/>
            <person name="Kao F.Y."/>
            <person name="Lin S.-J."/>
            <person name="Hsiao S.-H."/>
            <person name="Tseng I.C."/>
            <person name="Hsing Y.-I.C."/>
            <person name="Wu H.-P."/>
            <person name="Chen C.-S."/>
            <person name="Shaw J.-F."/>
            <person name="Wu J."/>
            <person name="Matsumoto T."/>
            <person name="Sasaki T."/>
            <person name="Chen H.-C."/>
            <person name="Chow T.-Y."/>
        </authorList>
    </citation>
    <scope>NUCLEOTIDE SEQUENCE [LARGE SCALE GENOMIC DNA]</scope>
    <source>
        <strain>cv. Nipponbare</strain>
    </source>
</reference>
<reference key="3">
    <citation type="journal article" date="2005" name="Nature">
        <title>The map-based sequence of the rice genome.</title>
        <authorList>
            <consortium name="International rice genome sequencing project (IRGSP)"/>
        </authorList>
    </citation>
    <scope>NUCLEOTIDE SEQUENCE [LARGE SCALE GENOMIC DNA]</scope>
    <source>
        <strain>cv. Nipponbare</strain>
    </source>
</reference>
<reference key="4">
    <citation type="journal article" date="2008" name="Nucleic Acids Res.">
        <title>The rice annotation project database (RAP-DB): 2008 update.</title>
        <authorList>
            <consortium name="The rice annotation project (RAP)"/>
        </authorList>
    </citation>
    <scope>GENOME REANNOTATION</scope>
    <source>
        <strain>cv. Nipponbare</strain>
    </source>
</reference>
<reference key="5">
    <citation type="journal article" date="2013" name="Rice">
        <title>Improvement of the Oryza sativa Nipponbare reference genome using next generation sequence and optical map data.</title>
        <authorList>
            <person name="Kawahara Y."/>
            <person name="de la Bastide M."/>
            <person name="Hamilton J.P."/>
            <person name="Kanamori H."/>
            <person name="McCombie W.R."/>
            <person name="Ouyang S."/>
            <person name="Schwartz D.C."/>
            <person name="Tanaka T."/>
            <person name="Wu J."/>
            <person name="Zhou S."/>
            <person name="Childs K.L."/>
            <person name="Davidson R.M."/>
            <person name="Lin H."/>
            <person name="Quesada-Ocampo L."/>
            <person name="Vaillancourt B."/>
            <person name="Sakai H."/>
            <person name="Lee S.S."/>
            <person name="Kim J."/>
            <person name="Numa H."/>
            <person name="Itoh T."/>
            <person name="Buell C.R."/>
            <person name="Matsumoto T."/>
        </authorList>
    </citation>
    <scope>GENOME REANNOTATION</scope>
    <source>
        <strain>cv. Nipponbare</strain>
    </source>
</reference>
<reference key="6">
    <citation type="journal article" date="2005" name="PLoS Biol.">
        <title>The genomes of Oryza sativa: a history of duplications.</title>
        <authorList>
            <person name="Yu J."/>
            <person name="Wang J."/>
            <person name="Lin W."/>
            <person name="Li S."/>
            <person name="Li H."/>
            <person name="Zhou J."/>
            <person name="Ni P."/>
            <person name="Dong W."/>
            <person name="Hu S."/>
            <person name="Zeng C."/>
            <person name="Zhang J."/>
            <person name="Zhang Y."/>
            <person name="Li R."/>
            <person name="Xu Z."/>
            <person name="Li S."/>
            <person name="Li X."/>
            <person name="Zheng H."/>
            <person name="Cong L."/>
            <person name="Lin L."/>
            <person name="Yin J."/>
            <person name="Geng J."/>
            <person name="Li G."/>
            <person name="Shi J."/>
            <person name="Liu J."/>
            <person name="Lv H."/>
            <person name="Li J."/>
            <person name="Wang J."/>
            <person name="Deng Y."/>
            <person name="Ran L."/>
            <person name="Shi X."/>
            <person name="Wang X."/>
            <person name="Wu Q."/>
            <person name="Li C."/>
            <person name="Ren X."/>
            <person name="Wang J."/>
            <person name="Wang X."/>
            <person name="Li D."/>
            <person name="Liu D."/>
            <person name="Zhang X."/>
            <person name="Ji Z."/>
            <person name="Zhao W."/>
            <person name="Sun Y."/>
            <person name="Zhang Z."/>
            <person name="Bao J."/>
            <person name="Han Y."/>
            <person name="Dong L."/>
            <person name="Ji J."/>
            <person name="Chen P."/>
            <person name="Wu S."/>
            <person name="Liu J."/>
            <person name="Xiao Y."/>
            <person name="Bu D."/>
            <person name="Tan J."/>
            <person name="Yang L."/>
            <person name="Ye C."/>
            <person name="Zhang J."/>
            <person name="Xu J."/>
            <person name="Zhou Y."/>
            <person name="Yu Y."/>
            <person name="Zhang B."/>
            <person name="Zhuang S."/>
            <person name="Wei H."/>
            <person name="Liu B."/>
            <person name="Lei M."/>
            <person name="Yu H."/>
            <person name="Li Y."/>
            <person name="Xu H."/>
            <person name="Wei S."/>
            <person name="He X."/>
            <person name="Fang L."/>
            <person name="Zhang Z."/>
            <person name="Zhang Y."/>
            <person name="Huang X."/>
            <person name="Su Z."/>
            <person name="Tong W."/>
            <person name="Li J."/>
            <person name="Tong Z."/>
            <person name="Li S."/>
            <person name="Ye J."/>
            <person name="Wang L."/>
            <person name="Fang L."/>
            <person name="Lei T."/>
            <person name="Chen C.-S."/>
            <person name="Chen H.-C."/>
            <person name="Xu Z."/>
            <person name="Li H."/>
            <person name="Huang H."/>
            <person name="Zhang F."/>
            <person name="Xu H."/>
            <person name="Li N."/>
            <person name="Zhao C."/>
            <person name="Li S."/>
            <person name="Dong L."/>
            <person name="Huang Y."/>
            <person name="Li L."/>
            <person name="Xi Y."/>
            <person name="Qi Q."/>
            <person name="Li W."/>
            <person name="Zhang B."/>
            <person name="Hu W."/>
            <person name="Zhang Y."/>
            <person name="Tian X."/>
            <person name="Jiao Y."/>
            <person name="Liang X."/>
            <person name="Jin J."/>
            <person name="Gao L."/>
            <person name="Zheng W."/>
            <person name="Hao B."/>
            <person name="Liu S.-M."/>
            <person name="Wang W."/>
            <person name="Yuan L."/>
            <person name="Cao M."/>
            <person name="McDermott J."/>
            <person name="Samudrala R."/>
            <person name="Wang J."/>
            <person name="Wong G.K.-S."/>
            <person name="Yang H."/>
        </authorList>
    </citation>
    <scope>NUCLEOTIDE SEQUENCE [LARGE SCALE GENOMIC DNA]</scope>
    <source>
        <strain>cv. Nipponbare</strain>
    </source>
</reference>
<reference key="7">
    <citation type="journal article" date="2003" name="Science">
        <title>Collection, mapping, and annotation of over 28,000 cDNA clones from japonica rice.</title>
        <authorList>
            <consortium name="The rice full-length cDNA consortium"/>
        </authorList>
    </citation>
    <scope>NUCLEOTIDE SEQUENCE [LARGE SCALE MRNA]</scope>
    <source>
        <strain>cv. Nipponbare</strain>
    </source>
</reference>
<sequence>MDSHNSAPPQIAEVRMDISSSTSVAAGNKVCRGAACDFSDSSNSSKDARERMASMRKLIIAVILCIIFMAVEVVGGIKANSLAILTDAAHLLSDVAAFAISLFSLWAAGWEATPQQSYGFFRIEILGALVSIQLIWLLAGILVYEAIVRLINESGEVQGSLMFAVSAFGLFVNIIMAVLLGHDHGHGHGHGHGHGHSHDHDHGGSDHDHHHHEDQEHGHVHHHEDGHGNSITVNLHHHPGTGHHHHDAEEPLLKSDAGCDSTQSGAKDAKKARRNINVHSAYLHVLGDSIQSIGVMIGGAIIWYKPEWKIIDLICTLIFSVIVLFTTIKMLRNILEVLMESTPREIDATSLENGLRDMDGVVAVHELHIWAITVGKVLLACHVTITQDADADQMLDKVIGYIKSEYNISHVTIQIERE</sequence>
<proteinExistence type="evidence at transcript level"/>
<dbReference type="EMBL" id="AY266290">
    <property type="protein sequence ID" value="AAP31024.1"/>
    <property type="molecule type" value="mRNA"/>
</dbReference>
<dbReference type="EMBL" id="AC130598">
    <property type="protein sequence ID" value="AAU10745.1"/>
    <property type="molecule type" value="Genomic_DNA"/>
</dbReference>
<dbReference type="EMBL" id="AP008211">
    <property type="protein sequence ID" value="BAF16453.1"/>
    <property type="molecule type" value="Genomic_DNA"/>
</dbReference>
<dbReference type="EMBL" id="AP014961">
    <property type="protein sequence ID" value="BAS92092.1"/>
    <property type="molecule type" value="Genomic_DNA"/>
</dbReference>
<dbReference type="EMBL" id="CM000142">
    <property type="protein sequence ID" value="EEE62201.1"/>
    <property type="molecule type" value="Genomic_DNA"/>
</dbReference>
<dbReference type="EMBL" id="AK100735">
    <property type="protein sequence ID" value="BAG94747.1"/>
    <property type="molecule type" value="mRNA"/>
</dbReference>
<dbReference type="RefSeq" id="XP_015640283.1">
    <property type="nucleotide sequence ID" value="XM_015784797.1"/>
</dbReference>
<dbReference type="RefSeq" id="XP_015640284.1">
    <property type="nucleotide sequence ID" value="XM_015784798.1"/>
</dbReference>
<dbReference type="SMR" id="Q688R1"/>
<dbReference type="FunCoup" id="Q688R1">
    <property type="interactions" value="1221"/>
</dbReference>
<dbReference type="STRING" id="39947.Q688R1"/>
<dbReference type="PaxDb" id="39947-Q688R1"/>
<dbReference type="EnsemblPlants" id="Os05t0128400-01">
    <property type="protein sequence ID" value="Os05t0128400-01"/>
    <property type="gene ID" value="Os05g0128400"/>
</dbReference>
<dbReference type="Gramene" id="Os05t0128400-01">
    <property type="protein sequence ID" value="Os05t0128400-01"/>
    <property type="gene ID" value="Os05g0128400"/>
</dbReference>
<dbReference type="KEGG" id="dosa:Os05g0128400"/>
<dbReference type="eggNOG" id="KOG1482">
    <property type="taxonomic scope" value="Eukaryota"/>
</dbReference>
<dbReference type="HOGENOM" id="CLU_013430_0_1_1"/>
<dbReference type="InParanoid" id="Q688R1"/>
<dbReference type="OMA" id="GHEKMLH"/>
<dbReference type="OrthoDB" id="9944568at2759"/>
<dbReference type="Proteomes" id="UP000000763">
    <property type="component" value="Chromosome 5"/>
</dbReference>
<dbReference type="Proteomes" id="UP000007752">
    <property type="component" value="Chromosome 5"/>
</dbReference>
<dbReference type="Proteomes" id="UP000059680">
    <property type="component" value="Chromosome 5"/>
</dbReference>
<dbReference type="GO" id="GO:0000325">
    <property type="term" value="C:plant-type vacuole"/>
    <property type="evidence" value="ECO:0000314"/>
    <property type="project" value="CACAO"/>
</dbReference>
<dbReference type="GO" id="GO:0005886">
    <property type="term" value="C:plasma membrane"/>
    <property type="evidence" value="ECO:0000318"/>
    <property type="project" value="GO_Central"/>
</dbReference>
<dbReference type="GO" id="GO:0005774">
    <property type="term" value="C:vacuolar membrane"/>
    <property type="evidence" value="ECO:0007669"/>
    <property type="project" value="UniProtKB-SubCell"/>
</dbReference>
<dbReference type="GO" id="GO:0005773">
    <property type="term" value="C:vacuole"/>
    <property type="evidence" value="ECO:0000318"/>
    <property type="project" value="GO_Central"/>
</dbReference>
<dbReference type="GO" id="GO:0005385">
    <property type="term" value="F:zinc ion transmembrane transporter activity"/>
    <property type="evidence" value="ECO:0000318"/>
    <property type="project" value="GO_Central"/>
</dbReference>
<dbReference type="GO" id="GO:0071577">
    <property type="term" value="P:zinc ion transmembrane transport"/>
    <property type="evidence" value="ECO:0000318"/>
    <property type="project" value="GO_Central"/>
</dbReference>
<dbReference type="Gene3D" id="1.20.1510.10">
    <property type="entry name" value="Cation efflux protein transmembrane domain"/>
    <property type="match status" value="1"/>
</dbReference>
<dbReference type="InterPro" id="IPR002524">
    <property type="entry name" value="Cation_efflux"/>
</dbReference>
<dbReference type="InterPro" id="IPR036837">
    <property type="entry name" value="Cation_efflux_CTD_sf"/>
</dbReference>
<dbReference type="InterPro" id="IPR027469">
    <property type="entry name" value="Cation_efflux_TMD_sf"/>
</dbReference>
<dbReference type="InterPro" id="IPR050681">
    <property type="entry name" value="CDF/SLC30A"/>
</dbReference>
<dbReference type="NCBIfam" id="TIGR01297">
    <property type="entry name" value="CDF"/>
    <property type="match status" value="1"/>
</dbReference>
<dbReference type="PANTHER" id="PTHR11562">
    <property type="entry name" value="CATION EFFLUX PROTEIN/ ZINC TRANSPORTER"/>
    <property type="match status" value="1"/>
</dbReference>
<dbReference type="PANTHER" id="PTHR11562:SF100">
    <property type="entry name" value="METAL TOLERANCE PROTEIN A2"/>
    <property type="match status" value="1"/>
</dbReference>
<dbReference type="Pfam" id="PF01545">
    <property type="entry name" value="Cation_efflux"/>
    <property type="match status" value="1"/>
</dbReference>
<dbReference type="SUPFAM" id="SSF160240">
    <property type="entry name" value="Cation efflux protein cytoplasmic domain-like"/>
    <property type="match status" value="1"/>
</dbReference>
<dbReference type="SUPFAM" id="SSF161111">
    <property type="entry name" value="Cation efflux protein transmembrane domain-like"/>
    <property type="match status" value="1"/>
</dbReference>
<gene>
    <name type="primary">MTP1</name>
    <name type="ordered locus">Os05g0128400</name>
    <name type="ordered locus">LOC_Os05g03780</name>
    <name type="ORF">OsJ_16988</name>
    <name type="ORF">OSJNBa0056I11.9</name>
</gene>
<protein>
    <recommendedName>
        <fullName>Metal tolerance protein 1</fullName>
        <shortName>OsMTP1</shortName>
    </recommendedName>
</protein>
<comment type="function">
    <text evidence="1">Involved in sequestration of excess zinc in the cytoplasm into vacuoles to maintain zinc homeostasis.</text>
</comment>
<comment type="subcellular location">
    <subcellularLocation>
        <location evidence="1">Vacuole membrane</location>
        <topology evidence="1">Multi-pass membrane protein</topology>
    </subcellularLocation>
    <text>Tonoplast.</text>
</comment>
<comment type="similarity">
    <text evidence="4">Belongs to the cation diffusion facilitator (CDF) transporter (TC 2.A.4) family. SLC30A subfamily.</text>
</comment>
<keyword id="KW-0406">Ion transport</keyword>
<keyword id="KW-0472">Membrane</keyword>
<keyword id="KW-1185">Reference proteome</keyword>
<keyword id="KW-0812">Transmembrane</keyword>
<keyword id="KW-1133">Transmembrane helix</keyword>
<keyword id="KW-0813">Transport</keyword>
<keyword id="KW-0926">Vacuole</keyword>
<keyword id="KW-0862">Zinc</keyword>
<keyword id="KW-0864">Zinc transport</keyword>
<accession>Q688R1</accession>
<accession>A0A0P0WHG4</accession>
<accession>Q84NH0</accession>